<proteinExistence type="inferred from homology"/>
<sequence length="368" mass="40869">MNNKCKIINRRKSDRIYVGKVAIGNNAPISVQSMTNTRTTNISETINQILELQKVGVDIVRISIPNLKAAESFKEIKKQTNVPLIADIHFDYRLALQAIKYGADCLRINPGNIGNKRRVSEIISYAKDENIPIRIGVNAGSLEKDILKKYKIPTPDALVESAMRHIEYFDALNFNQFKVSVKASDVFLAIESYRMLGKKITQPLHIGITESGGLRNGTVKSSIGIALLLLEGIGDTIRVSLAAHPTEEVKVGYDILKVLSLRARGINFIACPTCSRQEFDVINTVNQLEKNLEDISTPIDVSIIGCVVNGIGESKIATLGLAGSHKKSAFYEDGVRQKEKIKNEEIIEKMEIKIRKKIDKLNNSKKNN</sequence>
<name>ISPG_BUCAI</name>
<comment type="function">
    <text evidence="1">Converts 2C-methyl-D-erythritol 2,4-cyclodiphosphate (ME-2,4cPP) into 1-hydroxy-2-methyl-2-(E)-butenyl 4-diphosphate.</text>
</comment>
<comment type="catalytic activity">
    <reaction evidence="1">
        <text>(2E)-4-hydroxy-3-methylbut-2-enyl diphosphate + oxidized [flavodoxin] + H2O + 2 H(+) = 2-C-methyl-D-erythritol 2,4-cyclic diphosphate + reduced [flavodoxin]</text>
        <dbReference type="Rhea" id="RHEA:43604"/>
        <dbReference type="Rhea" id="RHEA-COMP:10622"/>
        <dbReference type="Rhea" id="RHEA-COMP:10623"/>
        <dbReference type="ChEBI" id="CHEBI:15377"/>
        <dbReference type="ChEBI" id="CHEBI:15378"/>
        <dbReference type="ChEBI" id="CHEBI:57618"/>
        <dbReference type="ChEBI" id="CHEBI:58210"/>
        <dbReference type="ChEBI" id="CHEBI:58483"/>
        <dbReference type="ChEBI" id="CHEBI:128753"/>
        <dbReference type="EC" id="1.17.7.3"/>
    </reaction>
</comment>
<comment type="cofactor">
    <cofactor evidence="1">
        <name>[4Fe-4S] cluster</name>
        <dbReference type="ChEBI" id="CHEBI:49883"/>
    </cofactor>
    <text evidence="1">Binds 1 [4Fe-4S] cluster.</text>
</comment>
<comment type="pathway">
    <text evidence="1">Isoprenoid biosynthesis; isopentenyl diphosphate biosynthesis via DXP pathway; isopentenyl diphosphate from 1-deoxy-D-xylulose 5-phosphate: step 5/6.</text>
</comment>
<comment type="similarity">
    <text evidence="1">Belongs to the IspG family.</text>
</comment>
<gene>
    <name evidence="1" type="primary">ispG</name>
    <name type="synonym">gcpE</name>
    <name type="ordered locus">BU287</name>
</gene>
<dbReference type="EC" id="1.17.7.3" evidence="1"/>
<dbReference type="EMBL" id="BA000003">
    <property type="protein sequence ID" value="BAB12997.1"/>
    <property type="molecule type" value="Genomic_DNA"/>
</dbReference>
<dbReference type="RefSeq" id="NP_240111.1">
    <property type="nucleotide sequence ID" value="NC_002528.1"/>
</dbReference>
<dbReference type="RefSeq" id="WP_010896047.1">
    <property type="nucleotide sequence ID" value="NC_002528.1"/>
</dbReference>
<dbReference type="SMR" id="P57374"/>
<dbReference type="STRING" id="563178.BUAP5A_282"/>
<dbReference type="EnsemblBacteria" id="BAB12997">
    <property type="protein sequence ID" value="BAB12997"/>
    <property type="gene ID" value="BAB12997"/>
</dbReference>
<dbReference type="KEGG" id="buc:BU287"/>
<dbReference type="PATRIC" id="fig|107806.10.peg.297"/>
<dbReference type="eggNOG" id="COG0821">
    <property type="taxonomic scope" value="Bacteria"/>
</dbReference>
<dbReference type="HOGENOM" id="CLU_042258_0_0_6"/>
<dbReference type="UniPathway" id="UPA00056">
    <property type="reaction ID" value="UER00096"/>
</dbReference>
<dbReference type="Proteomes" id="UP000001806">
    <property type="component" value="Chromosome"/>
</dbReference>
<dbReference type="GO" id="GO:0051539">
    <property type="term" value="F:4 iron, 4 sulfur cluster binding"/>
    <property type="evidence" value="ECO:0007669"/>
    <property type="project" value="UniProtKB-UniRule"/>
</dbReference>
<dbReference type="GO" id="GO:0046429">
    <property type="term" value="F:4-hydroxy-3-methylbut-2-en-1-yl diphosphate synthase activity (ferredoxin)"/>
    <property type="evidence" value="ECO:0007669"/>
    <property type="project" value="UniProtKB-UniRule"/>
</dbReference>
<dbReference type="GO" id="GO:0141197">
    <property type="term" value="F:4-hydroxy-3-methylbut-2-enyl-diphosphate synthase activity (flavodoxin)"/>
    <property type="evidence" value="ECO:0007669"/>
    <property type="project" value="UniProtKB-EC"/>
</dbReference>
<dbReference type="GO" id="GO:0005506">
    <property type="term" value="F:iron ion binding"/>
    <property type="evidence" value="ECO:0007669"/>
    <property type="project" value="InterPro"/>
</dbReference>
<dbReference type="GO" id="GO:0019288">
    <property type="term" value="P:isopentenyl diphosphate biosynthetic process, methylerythritol 4-phosphate pathway"/>
    <property type="evidence" value="ECO:0007669"/>
    <property type="project" value="UniProtKB-UniRule"/>
</dbReference>
<dbReference type="GO" id="GO:0016114">
    <property type="term" value="P:terpenoid biosynthetic process"/>
    <property type="evidence" value="ECO:0007669"/>
    <property type="project" value="InterPro"/>
</dbReference>
<dbReference type="FunFam" id="3.20.20.20:FF:000001">
    <property type="entry name" value="4-hydroxy-3-methylbut-2-en-1-yl diphosphate synthase (flavodoxin)"/>
    <property type="match status" value="1"/>
</dbReference>
<dbReference type="Gene3D" id="3.20.20.20">
    <property type="entry name" value="Dihydropteroate synthase-like"/>
    <property type="match status" value="1"/>
</dbReference>
<dbReference type="Gene3D" id="3.30.413.10">
    <property type="entry name" value="Sulfite Reductase Hemoprotein, domain 1"/>
    <property type="match status" value="1"/>
</dbReference>
<dbReference type="HAMAP" id="MF_00159">
    <property type="entry name" value="IspG"/>
    <property type="match status" value="1"/>
</dbReference>
<dbReference type="InterPro" id="IPR011005">
    <property type="entry name" value="Dihydropteroate_synth-like_sf"/>
</dbReference>
<dbReference type="InterPro" id="IPR016425">
    <property type="entry name" value="IspG_bac"/>
</dbReference>
<dbReference type="InterPro" id="IPR004588">
    <property type="entry name" value="IspG_bac-typ"/>
</dbReference>
<dbReference type="InterPro" id="IPR045854">
    <property type="entry name" value="NO2/SO3_Rdtase_4Fe4S_sf"/>
</dbReference>
<dbReference type="NCBIfam" id="TIGR00612">
    <property type="entry name" value="ispG_gcpE"/>
    <property type="match status" value="1"/>
</dbReference>
<dbReference type="NCBIfam" id="NF001540">
    <property type="entry name" value="PRK00366.1"/>
    <property type="match status" value="1"/>
</dbReference>
<dbReference type="PANTHER" id="PTHR30454">
    <property type="entry name" value="4-HYDROXY-3-METHYLBUT-2-EN-1-YL DIPHOSPHATE SYNTHASE"/>
    <property type="match status" value="1"/>
</dbReference>
<dbReference type="PANTHER" id="PTHR30454:SF0">
    <property type="entry name" value="4-HYDROXY-3-METHYLBUT-2-EN-1-YL DIPHOSPHATE SYNTHASE (FERREDOXIN), CHLOROPLASTIC"/>
    <property type="match status" value="1"/>
</dbReference>
<dbReference type="Pfam" id="PF04551">
    <property type="entry name" value="GcpE"/>
    <property type="match status" value="1"/>
</dbReference>
<dbReference type="PIRSF" id="PIRSF004640">
    <property type="entry name" value="IspG"/>
    <property type="match status" value="1"/>
</dbReference>
<dbReference type="SUPFAM" id="SSF51412">
    <property type="entry name" value="Inosine monophosphate dehydrogenase (IMPDH)"/>
    <property type="match status" value="1"/>
</dbReference>
<dbReference type="SUPFAM" id="SSF56014">
    <property type="entry name" value="Nitrite and sulphite reductase 4Fe-4S domain-like"/>
    <property type="match status" value="1"/>
</dbReference>
<keyword id="KW-0004">4Fe-4S</keyword>
<keyword id="KW-0408">Iron</keyword>
<keyword id="KW-0411">Iron-sulfur</keyword>
<keyword id="KW-0414">Isoprene biosynthesis</keyword>
<keyword id="KW-0479">Metal-binding</keyword>
<keyword id="KW-0560">Oxidoreductase</keyword>
<keyword id="KW-1185">Reference proteome</keyword>
<protein>
    <recommendedName>
        <fullName evidence="1">4-hydroxy-3-methylbut-2-en-1-yl diphosphate synthase (flavodoxin)</fullName>
        <ecNumber evidence="1">1.17.7.3</ecNumber>
    </recommendedName>
    <alternativeName>
        <fullName evidence="1">1-hydroxy-2-methyl-2-(E)-butenyl 4-diphosphate synthase</fullName>
    </alternativeName>
</protein>
<feature type="chain" id="PRO_0000190549" description="4-hydroxy-3-methylbut-2-en-1-yl diphosphate synthase (flavodoxin)">
    <location>
        <begin position="1"/>
        <end position="368"/>
    </location>
</feature>
<feature type="binding site" evidence="1">
    <location>
        <position position="271"/>
    </location>
    <ligand>
        <name>[4Fe-4S] cluster</name>
        <dbReference type="ChEBI" id="CHEBI:49883"/>
    </ligand>
</feature>
<feature type="binding site" evidence="1">
    <location>
        <position position="274"/>
    </location>
    <ligand>
        <name>[4Fe-4S] cluster</name>
        <dbReference type="ChEBI" id="CHEBI:49883"/>
    </ligand>
</feature>
<feature type="binding site" evidence="1">
    <location>
        <position position="306"/>
    </location>
    <ligand>
        <name>[4Fe-4S] cluster</name>
        <dbReference type="ChEBI" id="CHEBI:49883"/>
    </ligand>
</feature>
<feature type="binding site" evidence="1">
    <location>
        <position position="313"/>
    </location>
    <ligand>
        <name>[4Fe-4S] cluster</name>
        <dbReference type="ChEBI" id="CHEBI:49883"/>
    </ligand>
</feature>
<reference key="1">
    <citation type="journal article" date="2000" name="Nature">
        <title>Genome sequence of the endocellular bacterial symbiont of aphids Buchnera sp. APS.</title>
        <authorList>
            <person name="Shigenobu S."/>
            <person name="Watanabe H."/>
            <person name="Hattori M."/>
            <person name="Sakaki Y."/>
            <person name="Ishikawa H."/>
        </authorList>
    </citation>
    <scope>NUCLEOTIDE SEQUENCE [LARGE SCALE GENOMIC DNA]</scope>
    <source>
        <strain>APS</strain>
    </source>
</reference>
<accession>P57374</accession>
<organism>
    <name type="scientific">Buchnera aphidicola subsp. Acyrthosiphon pisum (strain APS)</name>
    <name type="common">Acyrthosiphon pisum symbiotic bacterium</name>
    <dbReference type="NCBI Taxonomy" id="107806"/>
    <lineage>
        <taxon>Bacteria</taxon>
        <taxon>Pseudomonadati</taxon>
        <taxon>Pseudomonadota</taxon>
        <taxon>Gammaproteobacteria</taxon>
        <taxon>Enterobacterales</taxon>
        <taxon>Erwiniaceae</taxon>
        <taxon>Buchnera</taxon>
    </lineage>
</organism>
<evidence type="ECO:0000255" key="1">
    <source>
        <dbReference type="HAMAP-Rule" id="MF_00159"/>
    </source>
</evidence>